<protein>
    <recommendedName>
        <fullName>Alpha-D-ribose 1-methylphosphonate 5-triphosphate synthase subunit PhnG</fullName>
        <shortName>RPnTP synthase subunit PhnG</shortName>
        <ecNumber>2.7.8.37</ecNumber>
    </recommendedName>
</protein>
<feature type="chain" id="PRO_0000058391" description="Alpha-D-ribose 1-methylphosphonate 5-triphosphate synthase subunit PhnG">
    <location>
        <begin position="1"/>
        <end position="150"/>
    </location>
</feature>
<feature type="sequence variant" description="In strain: B.">
    <original>Q</original>
    <variation>L</variation>
    <location>
        <position position="85"/>
    </location>
</feature>
<feature type="helix" evidence="4">
    <location>
        <begin position="5"/>
        <end position="17"/>
    </location>
</feature>
<feature type="helix" evidence="4">
    <location>
        <begin position="20"/>
        <end position="30"/>
    </location>
</feature>
<feature type="strand" evidence="4">
    <location>
        <begin position="36"/>
        <end position="52"/>
    </location>
</feature>
<feature type="helix" evidence="4">
    <location>
        <begin position="53"/>
        <end position="55"/>
    </location>
</feature>
<feature type="strand" evidence="4">
    <location>
        <begin position="57"/>
        <end position="74"/>
    </location>
</feature>
<feature type="strand" evidence="4">
    <location>
        <begin position="79"/>
        <end position="87"/>
    </location>
</feature>
<feature type="helix" evidence="4">
    <location>
        <begin position="89"/>
        <end position="102"/>
    </location>
</feature>
<feature type="helix" evidence="4">
    <location>
        <begin position="105"/>
        <end position="114"/>
    </location>
</feature>
<feature type="helix" evidence="4">
    <location>
        <begin position="116"/>
        <end position="134"/>
    </location>
</feature>
<feature type="helix" evidence="4">
    <location>
        <begin position="135"/>
        <end position="137"/>
    </location>
</feature>
<feature type="strand" evidence="5">
    <location>
        <begin position="142"/>
        <end position="144"/>
    </location>
</feature>
<name>PHNG_ECOLI</name>
<evidence type="ECO:0000269" key="1">
    <source>
    </source>
</evidence>
<evidence type="ECO:0000269" key="2">
    <source>
    </source>
</evidence>
<evidence type="ECO:0000305" key="3"/>
<evidence type="ECO:0007829" key="4">
    <source>
        <dbReference type="PDB" id="4XB6"/>
    </source>
</evidence>
<evidence type="ECO:0007829" key="5">
    <source>
        <dbReference type="PDB" id="7Z15"/>
    </source>
</evidence>
<organism>
    <name type="scientific">Escherichia coli (strain K12)</name>
    <dbReference type="NCBI Taxonomy" id="83333"/>
    <lineage>
        <taxon>Bacteria</taxon>
        <taxon>Pseudomonadati</taxon>
        <taxon>Pseudomonadota</taxon>
        <taxon>Gammaproteobacteria</taxon>
        <taxon>Enterobacterales</taxon>
        <taxon>Enterobacteriaceae</taxon>
        <taxon>Escherichia</taxon>
    </lineage>
</organism>
<gene>
    <name type="primary">phnG</name>
    <name type="ordered locus">b4101</name>
    <name type="ordered locus">JW4062</name>
</gene>
<dbReference type="EC" id="2.7.8.37"/>
<dbReference type="EMBL" id="J05260">
    <property type="protein sequence ID" value="AAA24344.1"/>
    <property type="molecule type" value="Genomic_DNA"/>
</dbReference>
<dbReference type="EMBL" id="D90227">
    <property type="protein sequence ID" value="BAA14267.1"/>
    <property type="molecule type" value="Genomic_DNA"/>
</dbReference>
<dbReference type="EMBL" id="U14003">
    <property type="protein sequence ID" value="AAA97000.1"/>
    <property type="molecule type" value="Genomic_DNA"/>
</dbReference>
<dbReference type="EMBL" id="U00096">
    <property type="protein sequence ID" value="AAC77062.1"/>
    <property type="molecule type" value="Genomic_DNA"/>
</dbReference>
<dbReference type="EMBL" id="AP009048">
    <property type="protein sequence ID" value="BAE78104.1"/>
    <property type="molecule type" value="Genomic_DNA"/>
</dbReference>
<dbReference type="PIR" id="D65219">
    <property type="entry name" value="D65219"/>
</dbReference>
<dbReference type="RefSeq" id="NP_418525.1">
    <property type="nucleotide sequence ID" value="NC_000913.3"/>
</dbReference>
<dbReference type="RefSeq" id="WP_000542790.1">
    <property type="nucleotide sequence ID" value="NZ_SSZK01000016.1"/>
</dbReference>
<dbReference type="PDB" id="4XB6">
    <property type="method" value="X-ray"/>
    <property type="resolution" value="1.70 A"/>
    <property type="chains" value="A/E=1-150"/>
</dbReference>
<dbReference type="PDB" id="7Z15">
    <property type="method" value="EM"/>
    <property type="resolution" value="1.93 A"/>
    <property type="chains" value="A/E=1-150"/>
</dbReference>
<dbReference type="PDB" id="7Z16">
    <property type="method" value="EM"/>
    <property type="resolution" value="2.09 A"/>
    <property type="chains" value="A/E=1-150"/>
</dbReference>
<dbReference type="PDB" id="7Z17">
    <property type="method" value="EM"/>
    <property type="resolution" value="2.57 A"/>
    <property type="chains" value="A/E=1-150"/>
</dbReference>
<dbReference type="PDB" id="7Z18">
    <property type="method" value="EM"/>
    <property type="resolution" value="1.98 A"/>
    <property type="chains" value="A/E=1-150"/>
</dbReference>
<dbReference type="PDB" id="7Z19">
    <property type="method" value="EM"/>
    <property type="resolution" value="2.57 A"/>
    <property type="chains" value="A/E=1-150"/>
</dbReference>
<dbReference type="PDBsum" id="4XB6"/>
<dbReference type="PDBsum" id="7Z15"/>
<dbReference type="PDBsum" id="7Z16"/>
<dbReference type="PDBsum" id="7Z17"/>
<dbReference type="PDBsum" id="7Z18"/>
<dbReference type="PDBsum" id="7Z19"/>
<dbReference type="EMDB" id="EMD-14441"/>
<dbReference type="EMDB" id="EMD-14443"/>
<dbReference type="EMDB" id="EMD-14444"/>
<dbReference type="EMDB" id="EMD-14445"/>
<dbReference type="SMR" id="P16685"/>
<dbReference type="BioGRID" id="4263094">
    <property type="interactions" value="3"/>
</dbReference>
<dbReference type="BioGRID" id="852910">
    <property type="interactions" value="1"/>
</dbReference>
<dbReference type="ComplexPortal" id="CPX-1929">
    <property type="entry name" value="PhnGHIJKL complex"/>
</dbReference>
<dbReference type="DIP" id="DIP-10486N"/>
<dbReference type="FunCoup" id="P16685">
    <property type="interactions" value="27"/>
</dbReference>
<dbReference type="IntAct" id="P16685">
    <property type="interactions" value="6"/>
</dbReference>
<dbReference type="STRING" id="511145.b4101"/>
<dbReference type="jPOST" id="P16685"/>
<dbReference type="PaxDb" id="511145-b4101"/>
<dbReference type="EnsemblBacteria" id="AAC77062">
    <property type="protein sequence ID" value="AAC77062"/>
    <property type="gene ID" value="b4101"/>
</dbReference>
<dbReference type="GeneID" id="948618"/>
<dbReference type="KEGG" id="ecj:JW4062"/>
<dbReference type="KEGG" id="eco:b4101"/>
<dbReference type="KEGG" id="ecoc:C3026_22165"/>
<dbReference type="PATRIC" id="fig|1411691.4.peg.2599"/>
<dbReference type="EchoBASE" id="EB0710"/>
<dbReference type="eggNOG" id="COG3624">
    <property type="taxonomic scope" value="Bacteria"/>
</dbReference>
<dbReference type="HOGENOM" id="CLU_109242_0_0_6"/>
<dbReference type="InParanoid" id="P16685"/>
<dbReference type="OMA" id="RQRWMSV"/>
<dbReference type="OrthoDB" id="530475at2"/>
<dbReference type="PhylomeDB" id="P16685"/>
<dbReference type="BioCyc" id="EcoCyc:EG10716-MONOMER"/>
<dbReference type="BioCyc" id="MetaCyc:EG10716-MONOMER"/>
<dbReference type="EvolutionaryTrace" id="P16685"/>
<dbReference type="PRO" id="PR:P16685"/>
<dbReference type="Proteomes" id="UP000000625">
    <property type="component" value="Chromosome"/>
</dbReference>
<dbReference type="GO" id="GO:0061694">
    <property type="term" value="C:alpha-D-ribose 1-methylphosphonate 5-triphosphate synthase complex"/>
    <property type="evidence" value="ECO:0000314"/>
    <property type="project" value="EcoCyc"/>
</dbReference>
<dbReference type="GO" id="GO:1904176">
    <property type="term" value="C:carbon phosphorus lyase complex"/>
    <property type="evidence" value="ECO:0000314"/>
    <property type="project" value="EcoCyc"/>
</dbReference>
<dbReference type="GO" id="GO:0061693">
    <property type="term" value="F:alpha-D-ribose 1-methylphosphonate 5-triphosphate synthase activity"/>
    <property type="evidence" value="ECO:0007669"/>
    <property type="project" value="UniProtKB-EC"/>
</dbReference>
<dbReference type="GO" id="GO:0019700">
    <property type="term" value="P:organic phosphonate catabolic process"/>
    <property type="evidence" value="ECO:0000315"/>
    <property type="project" value="EcoCyc"/>
</dbReference>
<dbReference type="GO" id="GO:0019634">
    <property type="term" value="P:organic phosphonate metabolic process"/>
    <property type="evidence" value="ECO:0000314"/>
    <property type="project" value="ComplexPortal"/>
</dbReference>
<dbReference type="GO" id="GO:0015716">
    <property type="term" value="P:organic phosphonate transport"/>
    <property type="evidence" value="ECO:0000314"/>
    <property type="project" value="ComplexPortal"/>
</dbReference>
<dbReference type="InterPro" id="IPR009609">
    <property type="entry name" value="Phosphonate_metab_PhnG"/>
</dbReference>
<dbReference type="NCBIfam" id="TIGR03293">
    <property type="entry name" value="PhnG_redo"/>
    <property type="match status" value="1"/>
</dbReference>
<dbReference type="Pfam" id="PF06754">
    <property type="entry name" value="PhnG"/>
    <property type="match status" value="1"/>
</dbReference>
<sequence>MHADTATRQHWMSVLAHSQPAELAARLNALNITADYEVIRAAETGLVQIQARMGGTGERFFAGDATLTRAAVRLTDGTLGYSWVQGRDKQHAERCALIDALMQQSRHFQNLSETLIAPLDADRMARIAARQAEVNASRVDFFTMVRGDNA</sequence>
<reference key="1">
    <citation type="journal article" date="1990" name="J. Biol. Chem.">
        <title>Molecular biology of carbon-phosphorus bond cleavage. Cloning and sequencing of the phn (psiD) genes involved in alkylphosphonate uptake and C-P lyase activity in Escherichia coli B.</title>
        <authorList>
            <person name="Chen C.-M."/>
            <person name="Ye Q.-Z."/>
            <person name="Zhu Z."/>
            <person name="Wanner B.L."/>
            <person name="Walsh C.T."/>
        </authorList>
    </citation>
    <scope>NUCLEOTIDE SEQUENCE [GENOMIC DNA]</scope>
    <source>
        <strain>B</strain>
    </source>
</reference>
<reference key="2">
    <citation type="journal article" date="1991" name="J. Bacteriol.">
        <title>Molecular analysis of the cryptic and functional phn operons for phosphonate use in Escherichia coli K-12.</title>
        <authorList>
            <person name="Makino K."/>
            <person name="Kim S.K."/>
            <person name="Shinagawa H."/>
            <person name="Amemura M."/>
            <person name="Nakata A."/>
        </authorList>
    </citation>
    <scope>NUCLEOTIDE SEQUENCE [GENOMIC DNA]</scope>
    <source>
        <strain>K12</strain>
    </source>
</reference>
<reference key="3">
    <citation type="journal article" date="1995" name="Nucleic Acids Res.">
        <title>Analysis of the Escherichia coli genome VI: DNA sequence of the region from 92.8 through 100 minutes.</title>
        <authorList>
            <person name="Burland V.D."/>
            <person name="Plunkett G. III"/>
            <person name="Sofia H.J."/>
            <person name="Daniels D.L."/>
            <person name="Blattner F.R."/>
        </authorList>
    </citation>
    <scope>NUCLEOTIDE SEQUENCE [LARGE SCALE GENOMIC DNA]</scope>
    <source>
        <strain>K12 / MG1655 / ATCC 47076</strain>
    </source>
</reference>
<reference key="4">
    <citation type="journal article" date="1997" name="Science">
        <title>The complete genome sequence of Escherichia coli K-12.</title>
        <authorList>
            <person name="Blattner F.R."/>
            <person name="Plunkett G. III"/>
            <person name="Bloch C.A."/>
            <person name="Perna N.T."/>
            <person name="Burland V."/>
            <person name="Riley M."/>
            <person name="Collado-Vides J."/>
            <person name="Glasner J.D."/>
            <person name="Rode C.K."/>
            <person name="Mayhew G.F."/>
            <person name="Gregor J."/>
            <person name="Davis N.W."/>
            <person name="Kirkpatrick H.A."/>
            <person name="Goeden M.A."/>
            <person name="Rose D.J."/>
            <person name="Mau B."/>
            <person name="Shao Y."/>
        </authorList>
    </citation>
    <scope>NUCLEOTIDE SEQUENCE [LARGE SCALE GENOMIC DNA]</scope>
    <source>
        <strain>K12 / MG1655 / ATCC 47076</strain>
    </source>
</reference>
<reference key="5">
    <citation type="journal article" date="2006" name="Mol. Syst. Biol.">
        <title>Highly accurate genome sequences of Escherichia coli K-12 strains MG1655 and W3110.</title>
        <authorList>
            <person name="Hayashi K."/>
            <person name="Morooka N."/>
            <person name="Yamamoto Y."/>
            <person name="Fujita K."/>
            <person name="Isono K."/>
            <person name="Choi S."/>
            <person name="Ohtsubo E."/>
            <person name="Baba T."/>
            <person name="Wanner B.L."/>
            <person name="Mori H."/>
            <person name="Horiuchi T."/>
        </authorList>
    </citation>
    <scope>NUCLEOTIDE SEQUENCE [LARGE SCALE GENOMIC DNA]</scope>
    <source>
        <strain>K12 / W3110 / ATCC 27325 / DSM 5911</strain>
    </source>
</reference>
<reference key="6">
    <citation type="journal article" date="2011" name="Nature">
        <title>Intermediates in the transformation of phosphonates to phosphate by bacteria.</title>
        <authorList>
            <person name="Kamat S.S."/>
            <person name="Williams H.J."/>
            <person name="Raushel F.M."/>
        </authorList>
    </citation>
    <scope>FUNCTION</scope>
    <scope>CATALYTIC ACTIVITY</scope>
    <source>
        <strain>K12 / MG1655 / ATCC 47076</strain>
    </source>
</reference>
<reference key="7">
    <citation type="journal article" date="2011" name="Proc. Natl. Acad. Sci. U.S.A.">
        <title>Five phosphonate operon gene products as components of a multi-subunit complex of the carbon-phosphorus lyase pathway.</title>
        <authorList>
            <person name="Jochimsen B."/>
            <person name="Lolle S."/>
            <person name="McSorley F.R."/>
            <person name="Nabi M."/>
            <person name="Stougaard J."/>
            <person name="Zechel D.L."/>
            <person name="Hove-Jensen B."/>
        </authorList>
    </citation>
    <scope>SUBUNIT</scope>
    <source>
        <strain>K12</strain>
    </source>
</reference>
<comment type="function">
    <text evidence="2">Together with PhnH, PhnI and PhnL is required for the transfer of the ribose triphosphate moiety from ATP to methyl phosphonate.</text>
</comment>
<comment type="catalytic activity">
    <reaction evidence="2">
        <text>methylphosphonate + ATP = alpha-D-ribose 1-methylphosphonate 5-triphosphate + adenine</text>
        <dbReference type="Rhea" id="RHEA:34679"/>
        <dbReference type="ChEBI" id="CHEBI:16708"/>
        <dbReference type="ChEBI" id="CHEBI:30616"/>
        <dbReference type="ChEBI" id="CHEBI:68684"/>
        <dbReference type="ChEBI" id="CHEBI:68823"/>
        <dbReference type="EC" id="2.7.8.37"/>
    </reaction>
</comment>
<comment type="subunit">
    <text evidence="1">Forms a complex with PhnH, PhnI, PhnJ and PhnK with the suggested composition PhnG(4)H(2)I(2)J(2)K.</text>
</comment>
<comment type="interaction">
    <interactant intactId="EBI-9126715">
        <id>P16685</id>
    </interactant>
    <interactant intactId="EBI-1127704">
        <id>P16687</id>
        <label>phnI</label>
    </interactant>
    <organismsDiffer>false</organismsDiffer>
    <experiments>14</experiments>
</comment>
<comment type="interaction">
    <interactant intactId="EBI-9126715">
        <id>P16685</id>
    </interactant>
    <interactant intactId="EBI-1132449">
        <id>P04983</id>
        <label>rbsA</label>
    </interactant>
    <organismsDiffer>false</organismsDiffer>
    <experiments>3</experiments>
</comment>
<comment type="miscellaneous">
    <text>The sequence shown is that of strain K12.</text>
</comment>
<comment type="similarity">
    <text evidence="3">Belongs to the PhnG family.</text>
</comment>
<keyword id="KW-0002">3D-structure</keyword>
<keyword id="KW-1185">Reference proteome</keyword>
<keyword id="KW-0808">Transferase</keyword>
<accession>P16685</accession>
<accession>Q2M6K2</accession>
<proteinExistence type="evidence at protein level"/>